<protein>
    <recommendedName>
        <fullName evidence="1">Iron-sulfur cluster insertion protein ErpA</fullName>
    </recommendedName>
</protein>
<dbReference type="EMBL" id="AE008923">
    <property type="protein sequence ID" value="AAM35388.1"/>
    <property type="molecule type" value="Genomic_DNA"/>
</dbReference>
<dbReference type="RefSeq" id="WP_002808218.1">
    <property type="nucleotide sequence ID" value="NC_003919.1"/>
</dbReference>
<dbReference type="SMR" id="Q8PQ32"/>
<dbReference type="GeneID" id="75151441"/>
<dbReference type="KEGG" id="xac:XAC0499"/>
<dbReference type="eggNOG" id="COG0316">
    <property type="taxonomic scope" value="Bacteria"/>
</dbReference>
<dbReference type="HOGENOM" id="CLU_069054_5_3_6"/>
<dbReference type="Proteomes" id="UP000000576">
    <property type="component" value="Chromosome"/>
</dbReference>
<dbReference type="GO" id="GO:0005829">
    <property type="term" value="C:cytosol"/>
    <property type="evidence" value="ECO:0007669"/>
    <property type="project" value="TreeGrafter"/>
</dbReference>
<dbReference type="GO" id="GO:0051537">
    <property type="term" value="F:2 iron, 2 sulfur cluster binding"/>
    <property type="evidence" value="ECO:0007669"/>
    <property type="project" value="TreeGrafter"/>
</dbReference>
<dbReference type="GO" id="GO:0051539">
    <property type="term" value="F:4 iron, 4 sulfur cluster binding"/>
    <property type="evidence" value="ECO:0007669"/>
    <property type="project" value="TreeGrafter"/>
</dbReference>
<dbReference type="GO" id="GO:0005506">
    <property type="term" value="F:iron ion binding"/>
    <property type="evidence" value="ECO:0007669"/>
    <property type="project" value="UniProtKB-UniRule"/>
</dbReference>
<dbReference type="GO" id="GO:0016226">
    <property type="term" value="P:iron-sulfur cluster assembly"/>
    <property type="evidence" value="ECO:0007669"/>
    <property type="project" value="UniProtKB-UniRule"/>
</dbReference>
<dbReference type="FunFam" id="2.60.300.12:FF:000002">
    <property type="entry name" value="Iron-sulfur cluster insertion protein ErpA"/>
    <property type="match status" value="1"/>
</dbReference>
<dbReference type="Gene3D" id="2.60.300.12">
    <property type="entry name" value="HesB-like domain"/>
    <property type="match status" value="1"/>
</dbReference>
<dbReference type="HAMAP" id="MF_01380">
    <property type="entry name" value="Fe_S_insert_ErpA"/>
    <property type="match status" value="1"/>
</dbReference>
<dbReference type="InterPro" id="IPR000361">
    <property type="entry name" value="FeS_biogenesis"/>
</dbReference>
<dbReference type="InterPro" id="IPR016092">
    <property type="entry name" value="FeS_cluster_insertion"/>
</dbReference>
<dbReference type="InterPro" id="IPR017870">
    <property type="entry name" value="FeS_cluster_insertion_CS"/>
</dbReference>
<dbReference type="InterPro" id="IPR023063">
    <property type="entry name" value="FeS_cluster_insertion_RrpA"/>
</dbReference>
<dbReference type="InterPro" id="IPR035903">
    <property type="entry name" value="HesB-like_dom_sf"/>
</dbReference>
<dbReference type="NCBIfam" id="TIGR00049">
    <property type="entry name" value="iron-sulfur cluster assembly accessory protein"/>
    <property type="match status" value="1"/>
</dbReference>
<dbReference type="NCBIfam" id="NF010147">
    <property type="entry name" value="PRK13623.1"/>
    <property type="match status" value="1"/>
</dbReference>
<dbReference type="PANTHER" id="PTHR43011">
    <property type="entry name" value="IRON-SULFUR CLUSTER ASSEMBLY 2 HOMOLOG, MITOCHONDRIAL"/>
    <property type="match status" value="1"/>
</dbReference>
<dbReference type="PANTHER" id="PTHR43011:SF1">
    <property type="entry name" value="IRON-SULFUR CLUSTER ASSEMBLY 2 HOMOLOG, MITOCHONDRIAL"/>
    <property type="match status" value="1"/>
</dbReference>
<dbReference type="Pfam" id="PF01521">
    <property type="entry name" value="Fe-S_biosyn"/>
    <property type="match status" value="1"/>
</dbReference>
<dbReference type="SUPFAM" id="SSF89360">
    <property type="entry name" value="HesB-like domain"/>
    <property type="match status" value="1"/>
</dbReference>
<dbReference type="PROSITE" id="PS01152">
    <property type="entry name" value="HESB"/>
    <property type="match status" value="1"/>
</dbReference>
<comment type="function">
    <text evidence="1">Required for insertion of 4Fe-4S clusters for at least IspG.</text>
</comment>
<comment type="cofactor">
    <cofactor evidence="1">
        <name>iron-sulfur cluster</name>
        <dbReference type="ChEBI" id="CHEBI:30408"/>
    </cofactor>
    <text evidence="1">Binds 1 iron-sulfur cluster per subunit.</text>
</comment>
<comment type="subunit">
    <text evidence="1">Homodimer.</text>
</comment>
<comment type="similarity">
    <text evidence="1">Belongs to the HesB/IscA family.</text>
</comment>
<name>ERPA_XANAC</name>
<sequence>MSTLVSLPTAAPAPDYQSIDRPLNFSVAAAAKVRELIQEEGNADLALRVYIQGGGCSGFQYGFEFDENRAEDDLAVATDGVTLLVDPLSLQYLMGAEVDYTESLTGAQFVIRNPNAKTTCGCGSSFSV</sequence>
<feature type="chain" id="PRO_0000311575" description="Iron-sulfur cluster insertion protein ErpA">
    <location>
        <begin position="1"/>
        <end position="128"/>
    </location>
</feature>
<feature type="binding site" evidence="1">
    <location>
        <position position="56"/>
    </location>
    <ligand>
        <name>iron-sulfur cluster</name>
        <dbReference type="ChEBI" id="CHEBI:30408"/>
    </ligand>
</feature>
<feature type="binding site" evidence="1">
    <location>
        <position position="120"/>
    </location>
    <ligand>
        <name>iron-sulfur cluster</name>
        <dbReference type="ChEBI" id="CHEBI:30408"/>
    </ligand>
</feature>
<feature type="binding site" evidence="1">
    <location>
        <position position="122"/>
    </location>
    <ligand>
        <name>iron-sulfur cluster</name>
        <dbReference type="ChEBI" id="CHEBI:30408"/>
    </ligand>
</feature>
<gene>
    <name evidence="1" type="primary">erpA</name>
    <name type="ordered locus">XAC0499</name>
</gene>
<proteinExistence type="inferred from homology"/>
<organism>
    <name type="scientific">Xanthomonas axonopodis pv. citri (strain 306)</name>
    <dbReference type="NCBI Taxonomy" id="190486"/>
    <lineage>
        <taxon>Bacteria</taxon>
        <taxon>Pseudomonadati</taxon>
        <taxon>Pseudomonadota</taxon>
        <taxon>Gammaproteobacteria</taxon>
        <taxon>Lysobacterales</taxon>
        <taxon>Lysobacteraceae</taxon>
        <taxon>Xanthomonas</taxon>
    </lineage>
</organism>
<evidence type="ECO:0000255" key="1">
    <source>
        <dbReference type="HAMAP-Rule" id="MF_01380"/>
    </source>
</evidence>
<accession>Q8PQ32</accession>
<keyword id="KW-0408">Iron</keyword>
<keyword id="KW-0411">Iron-sulfur</keyword>
<keyword id="KW-0479">Metal-binding</keyword>
<reference key="1">
    <citation type="journal article" date="2002" name="Nature">
        <title>Comparison of the genomes of two Xanthomonas pathogens with differing host specificities.</title>
        <authorList>
            <person name="da Silva A.C.R."/>
            <person name="Ferro J.A."/>
            <person name="Reinach F.C."/>
            <person name="Farah C.S."/>
            <person name="Furlan L.R."/>
            <person name="Quaggio R.B."/>
            <person name="Monteiro-Vitorello C.B."/>
            <person name="Van Sluys M.A."/>
            <person name="Almeida N.F. Jr."/>
            <person name="Alves L.M.C."/>
            <person name="do Amaral A.M."/>
            <person name="Bertolini M.C."/>
            <person name="Camargo L.E.A."/>
            <person name="Camarotte G."/>
            <person name="Cannavan F."/>
            <person name="Cardozo J."/>
            <person name="Chambergo F."/>
            <person name="Ciapina L.P."/>
            <person name="Cicarelli R.M.B."/>
            <person name="Coutinho L.L."/>
            <person name="Cursino-Santos J.R."/>
            <person name="El-Dorry H."/>
            <person name="Faria J.B."/>
            <person name="Ferreira A.J.S."/>
            <person name="Ferreira R.C.C."/>
            <person name="Ferro M.I.T."/>
            <person name="Formighieri E.F."/>
            <person name="Franco M.C."/>
            <person name="Greggio C.C."/>
            <person name="Gruber A."/>
            <person name="Katsuyama A.M."/>
            <person name="Kishi L.T."/>
            <person name="Leite R.P."/>
            <person name="Lemos E.G.M."/>
            <person name="Lemos M.V.F."/>
            <person name="Locali E.C."/>
            <person name="Machado M.A."/>
            <person name="Madeira A.M.B.N."/>
            <person name="Martinez-Rossi N.M."/>
            <person name="Martins E.C."/>
            <person name="Meidanis J."/>
            <person name="Menck C.F.M."/>
            <person name="Miyaki C.Y."/>
            <person name="Moon D.H."/>
            <person name="Moreira L.M."/>
            <person name="Novo M.T.M."/>
            <person name="Okura V.K."/>
            <person name="Oliveira M.C."/>
            <person name="Oliveira V.R."/>
            <person name="Pereira H.A."/>
            <person name="Rossi A."/>
            <person name="Sena J.A.D."/>
            <person name="Silva C."/>
            <person name="de Souza R.F."/>
            <person name="Spinola L.A.F."/>
            <person name="Takita M.A."/>
            <person name="Tamura R.E."/>
            <person name="Teixeira E.C."/>
            <person name="Tezza R.I.D."/>
            <person name="Trindade dos Santos M."/>
            <person name="Truffi D."/>
            <person name="Tsai S.M."/>
            <person name="White F.F."/>
            <person name="Setubal J.C."/>
            <person name="Kitajima J.P."/>
        </authorList>
    </citation>
    <scope>NUCLEOTIDE SEQUENCE [LARGE SCALE GENOMIC DNA]</scope>
    <source>
        <strain>306</strain>
    </source>
</reference>